<comment type="function">
    <text>Receptor that may have an important role in cell/cell signaling during nervous system formation.</text>
</comment>
<comment type="subcellular location">
    <subcellularLocation>
        <location>Cell membrane</location>
        <topology>Multi-pass membrane protein</topology>
    </subcellularLocation>
</comment>
<comment type="alternative products">
    <event type="alternative splicing"/>
    <isoform>
        <id>Q9NYQ6-1</id>
        <name>1</name>
        <sequence type="displayed"/>
    </isoform>
    <isoform>
        <id>Q9NYQ6-2</id>
        <name>2</name>
        <sequence type="described" ref="VSP_002011 VSP_002012"/>
    </isoform>
</comment>
<comment type="PTM">
    <text evidence="1">The iron and 2-oxoglutarate dependent 3-hydroxylation of aspartate and asparagine is (R) stereospecific within EGF domains.</text>
</comment>
<comment type="disease" evidence="11">
    <disease id="DI-02042">
        <name>Neural tube defects</name>
        <acronym>NTD</acronym>
        <description>Congenital malformations of the central nervous system and adjacent structures related to defective neural tube closure during the first trimester of pregnancy. Failure of neural tube closure can occur at any level of the embryonic axis. Common NTD forms include anencephaly, myelomeningocele and spina bifida, which result from the failure of fusion in the cranial and spinal region of the neural tube. NTDs have a multifactorial etiology encompassing both genetic and environmental components.</description>
        <dbReference type="MIM" id="182940"/>
    </disease>
    <text>The disease may be caused by variants affecting the gene represented in this entry.</text>
</comment>
<comment type="disease" evidence="12 13">
    <disease id="DI-06104">
        <name>Lymphatic malformation 9</name>
        <acronym>LMPHM9</acronym>
        <description>A form of primary lymphedema, a disease characterized by swelling of body parts due to developmental anomalies and functional defects of the lymphatic system. Patients with lymphedema may suffer from recurrent local infections. Impaired lymphatic drainage in the fetus can develop into hydrops fetalis, a severe condition characterized by excessive fluid accumulation in more than two fetal extra-vascular compartments and body cavities, placental enlargement and edema, pericardial or pleural effusion, or ascites. LMPHM9 is an autosomal dominant form with variable expressivity and incomplete penetrance, characterized by the onset of lower-extremity lymphedema in the first decades of life.</description>
        <dbReference type="MIM" id="619319"/>
    </disease>
    <text>The disease is caused by variants affecting the gene represented in this entry.</text>
</comment>
<comment type="similarity">
    <text evidence="15">Belongs to the G-protein coupled receptor 2 family. LN-TM7 subfamily.</text>
</comment>
<proteinExistence type="evidence at protein level"/>
<keyword id="KW-0002">3D-structure</keyword>
<keyword id="KW-0025">Alternative splicing</keyword>
<keyword id="KW-0106">Calcium</keyword>
<keyword id="KW-1003">Cell membrane</keyword>
<keyword id="KW-0217">Developmental protein</keyword>
<keyword id="KW-0225">Disease variant</keyword>
<keyword id="KW-1015">Disulfide bond</keyword>
<keyword id="KW-0245">EGF-like domain</keyword>
<keyword id="KW-0297">G-protein coupled receptor</keyword>
<keyword id="KW-0325">Glycoprotein</keyword>
<keyword id="KW-0379">Hydroxylation</keyword>
<keyword id="KW-0424">Laminin EGF-like domain</keyword>
<keyword id="KW-0472">Membrane</keyword>
<keyword id="KW-0597">Phosphoprotein</keyword>
<keyword id="KW-1267">Proteomics identification</keyword>
<keyword id="KW-0675">Receptor</keyword>
<keyword id="KW-1185">Reference proteome</keyword>
<keyword id="KW-0677">Repeat</keyword>
<keyword id="KW-0732">Signal</keyword>
<keyword id="KW-0807">Transducer</keyword>
<keyword id="KW-0812">Transmembrane</keyword>
<keyword id="KW-1133">Transmembrane helix</keyword>
<accession>Q9NYQ6</accession>
<accession>O95722</accession>
<accession>Q5TH47</accession>
<accession>Q9BWQ5</accession>
<accession>Q9Y506</accession>
<accession>Q9Y526</accession>
<organism>
    <name type="scientific">Homo sapiens</name>
    <name type="common">Human</name>
    <dbReference type="NCBI Taxonomy" id="9606"/>
    <lineage>
        <taxon>Eukaryota</taxon>
        <taxon>Metazoa</taxon>
        <taxon>Chordata</taxon>
        <taxon>Craniata</taxon>
        <taxon>Vertebrata</taxon>
        <taxon>Euteleostomi</taxon>
        <taxon>Mammalia</taxon>
        <taxon>Eutheria</taxon>
        <taxon>Euarchontoglires</taxon>
        <taxon>Primates</taxon>
        <taxon>Haplorrhini</taxon>
        <taxon>Catarrhini</taxon>
        <taxon>Hominidae</taxon>
        <taxon>Homo</taxon>
    </lineage>
</organism>
<evidence type="ECO:0000250" key="1"/>
<evidence type="ECO:0000250" key="2">
    <source>
        <dbReference type="UniProtKB" id="O35161"/>
    </source>
</evidence>
<evidence type="ECO:0000255" key="3"/>
<evidence type="ECO:0000255" key="4">
    <source>
        <dbReference type="PROSITE-ProRule" id="PRU00043"/>
    </source>
</evidence>
<evidence type="ECO:0000255" key="5">
    <source>
        <dbReference type="PROSITE-ProRule" id="PRU00076"/>
    </source>
</evidence>
<evidence type="ECO:0000255" key="6">
    <source>
        <dbReference type="PROSITE-ProRule" id="PRU00098"/>
    </source>
</evidence>
<evidence type="ECO:0000255" key="7">
    <source>
        <dbReference type="PROSITE-ProRule" id="PRU00122"/>
    </source>
</evidence>
<evidence type="ECO:0000255" key="8">
    <source>
        <dbReference type="PROSITE-ProRule" id="PRU00460"/>
    </source>
</evidence>
<evidence type="ECO:0000256" key="9">
    <source>
        <dbReference type="SAM" id="MobiDB-lite"/>
    </source>
</evidence>
<evidence type="ECO:0000269" key="10">
    <source>
    </source>
</evidence>
<evidence type="ECO:0000269" key="11">
    <source>
    </source>
</evidence>
<evidence type="ECO:0000269" key="12">
    <source>
    </source>
</evidence>
<evidence type="ECO:0000269" key="13">
    <source>
    </source>
</evidence>
<evidence type="ECO:0000303" key="14">
    <source>
    </source>
</evidence>
<evidence type="ECO:0000305" key="15"/>
<evidence type="ECO:0007744" key="16">
    <source>
    </source>
</evidence>
<evidence type="ECO:0007829" key="17">
    <source>
        <dbReference type="PDB" id="7SZ8"/>
    </source>
</evidence>
<sequence>MAPPPPPVLPVLLLLAAAAALPAMGLRAAAWEPRVPGGTRAFALRPGCTYAVGAACTPRAPRELLDVGRDGRLAGRRRVSGAGRPLPLQVRLVARSAPTALSRRLRARTHLPGCGARARLCGTGARLCGALCFPVPGGCAAAQHSALAAPTTLPACRCPPRPRPRCPGRPICLPPGGSVRLRLLCALRRAAGAVRVGLALEAATAGTPSASPSPSPPLPPNLPEARAGPARRARRGTSGRGSLKFPMPNYQVALFENEPAGTLILQLHAHYTIEGEEERVSYYMEGLFDERSRGYFRIDSATGAVSTDSVLDRETKETHVLRVKAVDYSTPPRSATTYITVLVKDTNDHSPVFEQSEYRERVRENLEVGYEVLTIRASDRDSPINANLRYRVLGGAWDVFQLNESSGVVSTRAVLDREEAAEYQLLVEANDQGRNPGPLSATATVYIEVEDENDNYPQFSEQNYVVQVPEDVGLNTAVLRVQATDRDQGQNAAIHYSILSGNVAGQFYLHSLSGILDVINPLDFEDVQKYSLSIKAQDGGRPPLINSSGVVSVQVLDVNDNEPIFVSSPFQATVLENVPLGYPVVHIQAVDADSGENARLHYRLVDTASTFLGGGSAGPKNPAPTPDFPFQIHNSSGWITVCAELDREEVEHYSFGVEAVDHGSPPMSSSTSVSITVLDVNDNDPVFTQPTYELRLNEDAAVGSSVLTLQARDRDANSVITYQLTGGNTRNRFALSSQRGGGLITLALPLDYKQEQQYVLAVTASDGTRSHTAHVLINVTDANTHRPVFQSSHYTVSVSEDRPVGTSIATLSANDEDTGENARITYVIQDPVPQFRIDPDSGTMYTMMELDYENQVAYTLTIMAQDNGIPQKSDTTTLEILILDANDNAPQFLWDFYQGSIFEDAPPSTSILQVSATDRDSGPNGRLLYTFQGGDDGDGDFYIEPTSGVIRTQRRLDRENVAVYNLWALAVDRGSPTPLSASVEIQVTILDINDNAPMFEKDELELFVEENNPVGSVVAKIRANDPDEGPNAQIMYQIVEGDMRHFFQLDLLNGDLRAMVELDFEVRREYVLVVQATSAPLVSRATVHILLVDQNDNPPVLPDFQILFNNYVTNKSNSFPTGVIGCIPAHDPDVSDSLNYTFVQGNELRLLLLDPATGELQLSRDLDNNRPLEALMEVSVSDGIHSVTAFCTLRVTIITDDMLTNSITVRLENMSQEKFLSPLLALFVEGVAAVLSTTKDDVFVFNVQNDTDVSSNILNVTFSALLPGGVRGQFFPSEDLQEQIYLNRTLLTTISTQRVLPFDDNICLREPCENYMKCVSVLRFDSSAPFLSSTTVLFRPIHPINGLRCRCPPGFTGDYCETEIDLCYSDPCGANGRCRSREGGYTCECFEDFTGEHCEVDARSGRCANGVCKNGGTCVNLLIGGFHCVCPPGEYERPYCEVTTRSFPPQSFVTFRGLRQRFHFTISLTFATQERNGLLLYNGRFNEKHDFIALEIVDEQVQLTFSAGETTTTVAPKVPSGVSDGRWHSVQVQYYNKPNIGHLGLPHGPSGEKMAVVTVDDCDTTMAVRFGKDIGNYSCAAQGTQTGSKKSLDLTGPLLLGGVPNLPEDFPVHNRQFVGCMRNLSVDGKNVDMAGFIANNGTREGCAARRNFCDGRRCQNGGTCVNRWNMYLCECPLRFGGKNCEQAMPHPQLFSGESVVSWSDLNIIISVPWYLGLMFRTRKEDSVLMEATSGGPTSFRLQILNNYLQFEVSHGPSDVESVMLSGLRVTDGEWHHLLIELKNVKEDSEMKHLVTMTLDYGMDQNKADIGGMLPGLTVRSVVVGGASEDKVSVRRGFRGCMQGVRMGGTPTNVATLNMNNALKVRVKDGCDVDDPCTSSPCPPNSRCHDAWEDYSCVCDKGYLGINCVDACHLNPCENMGACVRSPGSPQGYVCECGPSHYGPYCENKLDLPCPRGWWGNPVCGPCHCAVSKGFDPDCNKTNGQCQCKENYYKLLAQDTCLPCDCFPHGSHSRTCDMATGQCACKPGVIGRQCNRCDNPFAEVTTLGCEVIYNGCPKAFEAGIWWPQTKFGQPAAVPCPKGSVGNAVRHCSGEKGWLPPELFNCTTISFVDLRAMNEKLSRNETQVDGARALQLVRALRSATQHTGTLFGNDVRTAYQLLGHVLQHESWQQGFDLAATQDADFHEDVIHSGSALLAPATRAAWEQIQRSEGGTAQLLRRLEGYFSNVARNVRRTYLRPFVIVTANMILAVDIFDKFNFTGARVPRFDTIHEEFPRELESSVSFPADFFRPPEEKEGPLLRPAGRRTTPQTTRPGPGTEREAPISRRRRHPDDAGQFAVALVIIYRTLGQLLPERYDPDRRSLRLPHRPIINTPMVSTLVYSEGAPLPRPLERPVLVEFALLEVEERTKPVCVFWNHSLAVGGTGGWSARGCELLSRNRTHVACQCSHTASFAVLMDISRRENGEVLPLKIVTYAAVSLSLAALLVAFVLLSLVRMLRSNLHSIHKHLAVALFLSQLVFVIGINQTENPFLCTVVAILLHYIYMSTFAWTLVESLHVYRMLTEVRNIDTGPMRFYYVVGWGIPAIVTGLAVGLDPQGYGNPDFCWLSLQDTLIWSFAGPIGAVIIINTVTSVLSAKVSCQRKHHYYGKKGIVSLLRTAFLLLLLISATWLLGLLAVNRDALSFHYLFAIFSGLQGPFVLLFHCVLNQEVRKHLKGVLGGRKLHLEDSATTRATLLTRSLNCNTTFGDGPDMLRTDLGESTASLDSIVRDEGIQKLGVSSGLVRGSHGEPDASLMPRSCKDPPGHDSDSDSELSLDEQSSSYASSHSSDSEDDGVGAEEKWDPARGAVHSTPKGDAVANHVPAGWPDQSLAESDSEDPSGKPRLKVETKVSVELHREEQGSHRGEYPPDQESGGAARLASSQPPEQRKGILKNKVTYPPPLTLTEQTLKGRLREKLADCEQSPTSSRTSSLGSGGPDCAITVKSPGREPGRDHLNGVAMNVRTGSAQADGSDSEKP</sequence>
<feature type="signal peptide" evidence="3">
    <location>
        <begin position="1"/>
        <end position="20"/>
    </location>
</feature>
<feature type="chain" id="PRO_0000012914" description="Cadherin EGF LAG seven-pass G-type receptor 1">
    <location>
        <begin position="21"/>
        <end position="3014"/>
    </location>
</feature>
<feature type="topological domain" description="Extracellular" evidence="3">
    <location>
        <begin position="22"/>
        <end position="2469"/>
    </location>
</feature>
<feature type="transmembrane region" description="Helical; Name=1" evidence="3">
    <location>
        <begin position="2470"/>
        <end position="2490"/>
    </location>
</feature>
<feature type="topological domain" description="Cytoplasmic" evidence="3">
    <location>
        <begin position="2491"/>
        <end position="2501"/>
    </location>
</feature>
<feature type="transmembrane region" description="Helical; Name=2" evidence="3">
    <location>
        <begin position="2502"/>
        <end position="2522"/>
    </location>
</feature>
<feature type="topological domain" description="Extracellular" evidence="3">
    <location>
        <begin position="2523"/>
        <end position="2527"/>
    </location>
</feature>
<feature type="transmembrane region" description="Helical; Name=3" evidence="3">
    <location>
        <begin position="2528"/>
        <end position="2548"/>
    </location>
</feature>
<feature type="topological domain" description="Cytoplasmic" evidence="3">
    <location>
        <begin position="2549"/>
        <end position="2572"/>
    </location>
</feature>
<feature type="transmembrane region" description="Helical; Name=4" evidence="3">
    <location>
        <begin position="2573"/>
        <end position="2593"/>
    </location>
</feature>
<feature type="topological domain" description="Extracellular" evidence="3">
    <location>
        <begin position="2594"/>
        <end position="2611"/>
    </location>
</feature>
<feature type="transmembrane region" description="Helical; Name=5" evidence="3">
    <location>
        <begin position="2612"/>
        <end position="2632"/>
    </location>
</feature>
<feature type="topological domain" description="Cytoplasmic" evidence="3">
    <location>
        <begin position="2633"/>
        <end position="2655"/>
    </location>
</feature>
<feature type="transmembrane region" description="Helical; Name=6" evidence="3">
    <location>
        <begin position="2656"/>
        <end position="2676"/>
    </location>
</feature>
<feature type="topological domain" description="Extracellular" evidence="3">
    <location>
        <begin position="2677"/>
        <end position="2683"/>
    </location>
</feature>
<feature type="transmembrane region" description="Helical; Name=7" evidence="3">
    <location>
        <begin position="2684"/>
        <end position="2704"/>
    </location>
</feature>
<feature type="topological domain" description="Cytoplasmic" evidence="3">
    <location>
        <begin position="2705"/>
        <end position="3014"/>
    </location>
</feature>
<feature type="domain" description="Cadherin 1" evidence="4">
    <location>
        <begin position="246"/>
        <end position="353"/>
    </location>
</feature>
<feature type="domain" description="Cadherin 2" evidence="4">
    <location>
        <begin position="354"/>
        <end position="459"/>
    </location>
</feature>
<feature type="domain" description="Cadherin 3" evidence="4">
    <location>
        <begin position="460"/>
        <end position="565"/>
    </location>
</feature>
<feature type="domain" description="Cadherin 4" evidence="4">
    <location>
        <begin position="566"/>
        <end position="687"/>
    </location>
</feature>
<feature type="domain" description="Cadherin 5" evidence="4">
    <location>
        <begin position="688"/>
        <end position="789"/>
    </location>
</feature>
<feature type="domain" description="Cadherin 6" evidence="4">
    <location>
        <begin position="790"/>
        <end position="892"/>
    </location>
</feature>
<feature type="domain" description="Cadherin 7" evidence="4">
    <location>
        <begin position="893"/>
        <end position="999"/>
    </location>
</feature>
<feature type="domain" description="Cadherin 8" evidence="4">
    <location>
        <begin position="1000"/>
        <end position="1101"/>
    </location>
</feature>
<feature type="domain" description="Cadherin 9" evidence="4">
    <location>
        <begin position="1106"/>
        <end position="1224"/>
    </location>
</feature>
<feature type="domain" description="EGF-like 1; calcium-binding" evidence="5">
    <location>
        <begin position="1303"/>
        <end position="1361"/>
    </location>
</feature>
<feature type="domain" description="EGF-like 2; calcium-binding" evidence="5">
    <location>
        <begin position="1363"/>
        <end position="1399"/>
    </location>
</feature>
<feature type="domain" description="EGF-like 3; calcium-binding" evidence="5">
    <location>
        <begin position="1403"/>
        <end position="1441"/>
    </location>
</feature>
<feature type="domain" description="Laminin G-like 1" evidence="7">
    <location>
        <begin position="1442"/>
        <end position="1646"/>
    </location>
</feature>
<feature type="domain" description="EGF-like 4; calcium-binding" evidence="5">
    <location>
        <begin position="1649"/>
        <end position="1685"/>
    </location>
</feature>
<feature type="domain" description="Laminin G-like 2" evidence="7">
    <location>
        <begin position="1689"/>
        <end position="1870"/>
    </location>
</feature>
<feature type="domain" description="EGF-like 5; calcium-binding" evidence="5">
    <location>
        <begin position="1872"/>
        <end position="1907"/>
    </location>
</feature>
<feature type="domain" description="EGF-like 6; calcium-binding" evidence="5">
    <location>
        <begin position="1908"/>
        <end position="1946"/>
    </location>
</feature>
<feature type="domain" description="EGF-like 7; calcium-binding" evidence="5">
    <location>
        <begin position="1947"/>
        <end position="1979"/>
    </location>
</feature>
<feature type="domain" description="EGF-like 8; calcium-binding" evidence="5">
    <location>
        <begin position="1981"/>
        <end position="2016"/>
    </location>
</feature>
<feature type="domain" description="Laminin EGF-like" evidence="8">
    <location>
        <begin position="2003"/>
        <end position="2050"/>
    </location>
</feature>
<feature type="domain" description="GAIN-B" evidence="6">
    <location>
        <begin position="2297"/>
        <end position="2461"/>
    </location>
</feature>
<feature type="region of interest" description="Disordered" evidence="9">
    <location>
        <begin position="205"/>
        <end position="242"/>
    </location>
</feature>
<feature type="region of interest" description="Disordered" evidence="9">
    <location>
        <begin position="2291"/>
        <end position="2328"/>
    </location>
</feature>
<feature type="region of interest" description="GPS" evidence="6">
    <location>
        <begin position="2411"/>
        <end position="2461"/>
    </location>
</feature>
<feature type="region of interest" description="Disordered" evidence="9">
    <location>
        <begin position="2777"/>
        <end position="2939"/>
    </location>
</feature>
<feature type="region of interest" description="Disordered" evidence="9">
    <location>
        <begin position="2954"/>
        <end position="3014"/>
    </location>
</feature>
<feature type="compositionally biased region" description="Pro residues" evidence="9">
    <location>
        <begin position="211"/>
        <end position="222"/>
    </location>
</feature>
<feature type="compositionally biased region" description="Low complexity" evidence="9">
    <location>
        <begin position="2300"/>
        <end position="2316"/>
    </location>
</feature>
<feature type="compositionally biased region" description="Basic and acidic residues" evidence="9">
    <location>
        <begin position="2796"/>
        <end position="2806"/>
    </location>
</feature>
<feature type="compositionally biased region" description="Low complexity" evidence="9">
    <location>
        <begin position="2814"/>
        <end position="2825"/>
    </location>
</feature>
<feature type="compositionally biased region" description="Basic and acidic residues" evidence="9">
    <location>
        <begin position="2876"/>
        <end position="2904"/>
    </location>
</feature>
<feature type="compositionally biased region" description="Low complexity" evidence="9">
    <location>
        <begin position="2960"/>
        <end position="2969"/>
    </location>
</feature>
<feature type="compositionally biased region" description="Basic and acidic residues" evidence="9">
    <location>
        <begin position="2983"/>
        <end position="2992"/>
    </location>
</feature>
<feature type="modified residue" description="(3R)-3-hydroxyasparagine" evidence="3">
    <location>
        <position position="1666"/>
    </location>
</feature>
<feature type="modified residue" description="(3R)-3-hydroxyaspartate" evidence="3">
    <location>
        <position position="1889"/>
    </location>
</feature>
<feature type="modified residue" description="Phosphoserine" evidence="2">
    <location>
        <position position="2761"/>
    </location>
</feature>
<feature type="modified residue" description="Phosphoserine" evidence="16">
    <location>
        <position position="2764"/>
    </location>
</feature>
<feature type="modified residue" description="Phosphoserine" evidence="2">
    <location>
        <position position="2871"/>
    </location>
</feature>
<feature type="modified residue" description="Phosphoserine" evidence="2">
    <location>
        <position position="2873"/>
    </location>
</feature>
<feature type="glycosylation site" description="N-linked (GlcNAc...) asparagine" evidence="3">
    <location>
        <position position="403"/>
    </location>
</feature>
<feature type="glycosylation site" description="N-linked (GlcNAc...) asparagine" evidence="3">
    <location>
        <position position="546"/>
    </location>
</feature>
<feature type="glycosylation site" description="N-linked (GlcNAc...) asparagine" evidence="3">
    <location>
        <position position="634"/>
    </location>
</feature>
<feature type="glycosylation site" description="N-linked (GlcNAc...) asparagine" evidence="3">
    <location>
        <position position="778"/>
    </location>
</feature>
<feature type="glycosylation site" description="N-linked (GlcNAc...) asparagine" evidence="3">
    <location>
        <position position="1114"/>
    </location>
</feature>
<feature type="glycosylation site" description="N-linked (GlcNAc...) asparagine" evidence="3">
    <location>
        <position position="1139"/>
    </location>
</feature>
<feature type="glycosylation site" description="N-linked (GlcNAc...) asparagine" evidence="3">
    <location>
        <position position="1213"/>
    </location>
</feature>
<feature type="glycosylation site" description="N-linked (GlcNAc...) asparagine" evidence="3">
    <location>
        <position position="1249"/>
    </location>
</feature>
<feature type="glycosylation site" description="N-linked (GlcNAc...) asparagine" evidence="3">
    <location>
        <position position="1259"/>
    </location>
</feature>
<feature type="glycosylation site" description="N-linked (GlcNAc...) asparagine" evidence="3">
    <location>
        <position position="1287"/>
    </location>
</feature>
<feature type="glycosylation site" description="N-linked (GlcNAc...) asparagine" evidence="3">
    <location>
        <position position="1576"/>
    </location>
</feature>
<feature type="glycosylation site" description="N-linked (GlcNAc...) asparagine" evidence="3">
    <location>
        <position position="1623"/>
    </location>
</feature>
<feature type="glycosylation site" description="N-linked (GlcNAc...) asparagine" evidence="3">
    <location>
        <position position="1640"/>
    </location>
</feature>
<feature type="glycosylation site" description="N-linked (GlcNAc...) asparagine" evidence="3">
    <location>
        <position position="1979"/>
    </location>
</feature>
<feature type="glycosylation site" description="N-linked (GlcNAc...) asparagine" evidence="3">
    <location>
        <position position="2103"/>
    </location>
</feature>
<feature type="glycosylation site" description="N-linked (GlcNAc...) asparagine" evidence="3">
    <location>
        <position position="2122"/>
    </location>
</feature>
<feature type="glycosylation site" description="N-linked (GlcNAc...) asparagine" evidence="3">
    <location>
        <position position="2257"/>
    </location>
</feature>
<feature type="glycosylation site" description="N-linked (GlcNAc...) asparagine" evidence="3">
    <location>
        <position position="2415"/>
    </location>
</feature>
<feature type="glycosylation site" description="N-linked (GlcNAc...) asparagine" evidence="3">
    <location>
        <position position="2437"/>
    </location>
</feature>
<feature type="glycosylation site" description="N-linked (GlcNAc...) asparagine" evidence="3">
    <location>
        <position position="2523"/>
    </location>
</feature>
<feature type="disulfide bond" evidence="1">
    <location>
        <begin position="1307"/>
        <end position="1318"/>
    </location>
</feature>
<feature type="disulfide bond" evidence="1">
    <location>
        <begin position="1312"/>
        <end position="1349"/>
    </location>
</feature>
<feature type="disulfide bond" evidence="1">
    <location>
        <begin position="1351"/>
        <end position="1360"/>
    </location>
</feature>
<feature type="disulfide bond" evidence="1">
    <location>
        <begin position="1367"/>
        <end position="1378"/>
    </location>
</feature>
<feature type="disulfide bond" evidence="1">
    <location>
        <begin position="1372"/>
        <end position="1387"/>
    </location>
</feature>
<feature type="disulfide bond" evidence="1">
    <location>
        <begin position="1389"/>
        <end position="1398"/>
    </location>
</feature>
<feature type="disulfide bond" evidence="1">
    <location>
        <begin position="1407"/>
        <end position="1418"/>
    </location>
</feature>
<feature type="disulfide bond" evidence="1">
    <location>
        <begin position="1412"/>
        <end position="1428"/>
    </location>
</feature>
<feature type="disulfide bond" evidence="1">
    <location>
        <begin position="1430"/>
        <end position="1440"/>
    </location>
</feature>
<feature type="disulfide bond" evidence="1">
    <location>
        <begin position="1620"/>
        <end position="1646"/>
    </location>
</feature>
<feature type="disulfide bond" evidence="1">
    <location>
        <begin position="1653"/>
        <end position="1664"/>
    </location>
</feature>
<feature type="disulfide bond" evidence="1">
    <location>
        <begin position="1658"/>
        <end position="1673"/>
    </location>
</feature>
<feature type="disulfide bond" evidence="1">
    <location>
        <begin position="1675"/>
        <end position="1684"/>
    </location>
</feature>
<feature type="disulfide bond" evidence="1">
    <location>
        <begin position="1840"/>
        <end position="1870"/>
    </location>
</feature>
<feature type="disulfide bond" evidence="1">
    <location>
        <begin position="1876"/>
        <end position="1887"/>
    </location>
</feature>
<feature type="disulfide bond" evidence="1">
    <location>
        <begin position="1881"/>
        <end position="1896"/>
    </location>
</feature>
<feature type="disulfide bond" evidence="1">
    <location>
        <begin position="1898"/>
        <end position="1907"/>
    </location>
</feature>
<feature type="disulfide bond" evidence="1">
    <location>
        <begin position="1911"/>
        <end position="1922"/>
    </location>
</feature>
<feature type="disulfide bond" evidence="1">
    <location>
        <begin position="1916"/>
        <end position="1934"/>
    </location>
</feature>
<feature type="disulfide bond" evidence="1">
    <location>
        <begin position="1936"/>
        <end position="1945"/>
    </location>
</feature>
<feature type="disulfide bond" evidence="1">
    <location>
        <begin position="1953"/>
        <end position="1966"/>
    </location>
</feature>
<feature type="disulfide bond" evidence="1">
    <location>
        <begin position="1968"/>
        <end position="1978"/>
    </location>
</feature>
<feature type="disulfide bond" evidence="1">
    <location>
        <begin position="1985"/>
        <end position="2000"/>
    </location>
</feature>
<feature type="disulfide bond" evidence="1">
    <location>
        <begin position="1987"/>
        <end position="2003"/>
    </location>
</feature>
<feature type="disulfide bond" evidence="1">
    <location>
        <begin position="2005"/>
        <end position="2015"/>
    </location>
</feature>
<feature type="disulfide bond" evidence="1">
    <location>
        <begin position="2024"/>
        <end position="2033"/>
    </location>
</feature>
<feature type="disulfide bond" evidence="1">
    <location>
        <begin position="2036"/>
        <end position="2048"/>
    </location>
</feature>
<feature type="disulfide bond" evidence="6">
    <location>
        <begin position="2411"/>
        <end position="2443"/>
    </location>
</feature>
<feature type="disulfide bond" evidence="6">
    <location>
        <begin position="2431"/>
        <end position="2445"/>
    </location>
</feature>
<feature type="splice variant" id="VSP_002011" description="In isoform 2." evidence="14">
    <original>GEH</original>
    <variation>EIS</variation>
    <location>
        <begin position="1395"/>
        <end position="1397"/>
    </location>
</feature>
<feature type="splice variant" id="VSP_002012" description="In isoform 2." evidence="14">
    <location>
        <begin position="1398"/>
        <end position="3014"/>
    </location>
</feature>
<feature type="sequence variant" id="VAR_085932" description="In LMPHM9." evidence="12">
    <location>
        <begin position="290"/>
        <end position="3014"/>
    </location>
</feature>
<feature type="sequence variant" id="VAR_049464" description="In dbSNP:rs34141466.">
    <original>I</original>
    <variation>V</variation>
    <location>
        <position position="587"/>
    </location>
</feature>
<feature type="sequence variant" id="VAR_016094" description="In dbSNP:rs4823850." evidence="10">
    <original>S</original>
    <variation>W</variation>
    <location>
        <position position="664"/>
    </location>
</feature>
<feature type="sequence variant" id="VAR_067213" description="In NTD; shows significantly reduced protein localization to the cell membrane; dbSNP:rs12170597." evidence="11">
    <original>A</original>
    <variation>V</variation>
    <location>
        <position position="773"/>
    </location>
</feature>
<feature type="sequence variant" id="VAR_085933" description="In LMPHM9; uncertain significance; dbSNP:rs146657902." evidence="13">
    <original>A</original>
    <variation>T</variation>
    <location>
        <position position="1058"/>
    </location>
</feature>
<feature type="sequence variant" id="VAR_016095" description="In dbSNP:rs4823561." evidence="10">
    <original>C</original>
    <variation>R</variation>
    <location>
        <position position="1126"/>
    </location>
</feature>
<feature type="sequence variant" id="VAR_049465" description="In dbSNP:rs6008842.">
    <original>V</original>
    <variation>I</variation>
    <location>
        <position position="1242"/>
    </location>
</feature>
<feature type="sequence variant" id="VAR_085934" description="In LMPHM9; uncertain significance." evidence="13">
    <original>N</original>
    <variation>S</variation>
    <location>
        <position position="1539"/>
    </location>
</feature>
<feature type="sequence variant" id="VAR_085935" description="In LMPHM9; uncertain significance; dbSNP:rs369237672." evidence="13">
    <original>P</original>
    <variation>H</variation>
    <location>
        <position position="1883"/>
    </location>
</feature>
<feature type="sequence variant" id="VAR_049466" description="In dbSNP:rs34467708.">
    <original>Y</original>
    <variation>H</variation>
    <location>
        <position position="1894"/>
    </location>
</feature>
<feature type="sequence variant" id="VAR_085936" description="In LMPHM9." evidence="12">
    <location>
        <begin position="1957"/>
        <end position="3014"/>
    </location>
</feature>
<feature type="sequence variant" id="VAR_049467" description="In dbSNP:rs6008795.">
    <original>L</original>
    <variation>P</variation>
    <location>
        <position position="1994"/>
    </location>
</feature>
<feature type="sequence variant" id="VAR_049468" description="In dbSNP:rs6008794.">
    <original>L</original>
    <variation>P</variation>
    <location>
        <position position="1995"/>
    </location>
</feature>
<feature type="sequence variant" id="VAR_049469" description="In dbSNP:rs12169391.">
    <original>T</original>
    <variation>M</variation>
    <location>
        <position position="2045"/>
    </location>
</feature>
<feature type="sequence variant" id="VAR_024479" description="In dbSNP:rs4044210.">
    <original>I</original>
    <variation>V</variation>
    <location>
        <position position="2107"/>
    </location>
</feature>
<feature type="sequence variant" id="VAR_085937" description="In LMPHM9; uncertain significance; dbSNP:rs1167228557." evidence="13">
    <original>G</original>
    <variation>V</variation>
    <location>
        <position position="2150"/>
    </location>
</feature>
<feature type="sequence variant" id="VAR_049470" description="In dbSNP:rs34267201.">
    <original>R</original>
    <variation>H</variation>
    <location>
        <position position="2219"/>
    </location>
</feature>
<feature type="sequence variant" id="VAR_024480" description="In dbSNP:rs6007897.">
    <original>T</original>
    <variation>A</variation>
    <location>
        <position position="2268"/>
    </location>
</feature>
<feature type="sequence variant" id="VAR_067214" description="Does not affect protein localization to the cell membrane; dbSNP:rs7287089." evidence="11">
    <original>R</original>
    <variation>P</variation>
    <location>
        <position position="2312"/>
    </location>
</feature>
<feature type="sequence variant" id="VAR_085938" description="In LMPHM9; uncertain significance; dbSNP:rs774311996." evidence="13">
    <original>G</original>
    <variation>W</variation>
    <location>
        <position position="2425"/>
    </location>
</feature>
<feature type="sequence variant" id="VAR_067215" description="In NTD; shows reduced protein localization to the cell membrane; dbSNP:rs199688538." evidence="11">
    <original>R</original>
    <variation>Q</variation>
    <location>
        <position position="2438"/>
    </location>
</feature>
<feature type="sequence variant" id="VAR_085939" description="In LMPHM9; uncertain significance; dbSNP:rs138303327." evidence="13">
    <original>R</original>
    <variation>G</variation>
    <location>
        <position position="2709"/>
    </location>
</feature>
<feature type="sequence variant" id="VAR_067216" description="Does not affect protein localization to the cell membrane; dbSNP:rs148905592." evidence="11">
    <original>N</original>
    <variation>T</variation>
    <location>
        <position position="2739"/>
    </location>
</feature>
<feature type="sequence variant" id="VAR_049471" description="In dbSNP:rs12165943.">
    <original>C</original>
    <variation>S</variation>
    <location>
        <position position="2797"/>
    </location>
</feature>
<feature type="sequence variant" id="VAR_049472" description="In dbSNP:rs9615351.">
    <original>E</original>
    <variation>Q</variation>
    <location>
        <position position="2903"/>
    </location>
</feature>
<feature type="sequence variant" id="VAR_049473" description="In dbSNP:rs35364389.">
    <original>G</original>
    <variation>S</variation>
    <location>
        <position position="2948"/>
    </location>
</feature>
<feature type="sequence variant" id="VAR_067217" description="In NTD; shows reduced protein localization to the cell membrane; dbSNP:rs6008777." evidence="11">
    <original>S</original>
    <variation>L</variation>
    <location>
        <position position="2964"/>
    </location>
</feature>
<feature type="sequence variant" id="VAR_067218" description="In NTD; shows reduced protein localization to the cell membrane; dbSNP:rs61741871." evidence="11">
    <original>P</original>
    <variation>A</variation>
    <location>
        <position position="2983"/>
    </location>
</feature>
<feature type="sequence variant" id="VAR_085940" description="In LMPHM9; uncertain significance." evidence="13">
    <original>T</original>
    <variation>R</variation>
    <location>
        <position position="3001"/>
    </location>
</feature>
<feature type="sequence conflict" description="In Ref. 3; AAH00059." evidence="15" ref="3">
    <original>E</original>
    <variation>D</variation>
    <location>
        <position position="651"/>
    </location>
</feature>
<feature type="strand" evidence="17">
    <location>
        <begin position="564"/>
        <end position="575"/>
    </location>
</feature>
<feature type="strand" evidence="17">
    <location>
        <begin position="583"/>
        <end position="586"/>
    </location>
</feature>
<feature type="strand" evidence="17">
    <location>
        <begin position="600"/>
        <end position="605"/>
    </location>
</feature>
<feature type="strand" evidence="17">
    <location>
        <begin position="630"/>
        <end position="632"/>
    </location>
</feature>
<feature type="turn" evidence="17">
    <location>
        <begin position="634"/>
        <end position="636"/>
    </location>
</feature>
<feature type="strand" evidence="17">
    <location>
        <begin position="638"/>
        <end position="641"/>
    </location>
</feature>
<feature type="turn" evidence="17">
    <location>
        <begin position="647"/>
        <end position="649"/>
    </location>
</feature>
<feature type="strand" evidence="17">
    <location>
        <begin position="651"/>
        <end position="661"/>
    </location>
</feature>
<feature type="strand" evidence="17">
    <location>
        <begin position="668"/>
        <end position="678"/>
    </location>
</feature>
<feature type="strand" evidence="17">
    <location>
        <begin position="686"/>
        <end position="690"/>
    </location>
</feature>
<feature type="strand" evidence="17">
    <location>
        <begin position="692"/>
        <end position="697"/>
    </location>
</feature>
<feature type="strand" evidence="17">
    <location>
        <begin position="705"/>
        <end position="709"/>
    </location>
</feature>
<feature type="strand" evidence="17">
    <location>
        <begin position="721"/>
        <end position="726"/>
    </location>
</feature>
<feature type="helix" evidence="17">
    <location>
        <begin position="729"/>
        <end position="731"/>
    </location>
</feature>
<feature type="strand" evidence="17">
    <location>
        <begin position="733"/>
        <end position="737"/>
    </location>
</feature>
<feature type="strand" evidence="17">
    <location>
        <begin position="742"/>
        <end position="746"/>
    </location>
</feature>
<feature type="turn" evidence="17">
    <location>
        <begin position="752"/>
        <end position="754"/>
    </location>
</feature>
<feature type="strand" evidence="17">
    <location>
        <begin position="756"/>
        <end position="768"/>
    </location>
</feature>
<feature type="strand" evidence="17">
    <location>
        <begin position="770"/>
        <end position="780"/>
    </location>
</feature>
<feature type="strand" evidence="17">
    <location>
        <begin position="788"/>
        <end position="790"/>
    </location>
</feature>
<feature type="strand" evidence="17">
    <location>
        <begin position="792"/>
        <end position="799"/>
    </location>
</feature>
<feature type="strand" evidence="17">
    <location>
        <begin position="807"/>
        <end position="810"/>
    </location>
</feature>
<feature type="helix" evidence="17">
    <location>
        <begin position="819"/>
        <end position="822"/>
    </location>
</feature>
<feature type="strand" evidence="17">
    <location>
        <begin position="825"/>
        <end position="830"/>
    </location>
</feature>
<feature type="strand" evidence="17">
    <location>
        <begin position="835"/>
        <end position="837"/>
    </location>
</feature>
<feature type="turn" evidence="17">
    <location>
        <begin position="839"/>
        <end position="841"/>
    </location>
</feature>
<feature type="strand" evidence="17">
    <location>
        <begin position="843"/>
        <end position="846"/>
    </location>
</feature>
<feature type="turn" evidence="17">
    <location>
        <begin position="852"/>
        <end position="854"/>
    </location>
</feature>
<feature type="strand" evidence="17">
    <location>
        <begin position="856"/>
        <end position="865"/>
    </location>
</feature>
<feature type="strand" evidence="17">
    <location>
        <begin position="873"/>
        <end position="883"/>
    </location>
</feature>
<feature type="strand" evidence="17">
    <location>
        <begin position="891"/>
        <end position="902"/>
    </location>
</feature>
<feature type="strand" evidence="17">
    <location>
        <begin position="910"/>
        <end position="913"/>
    </location>
</feature>
<feature type="helix" evidence="17">
    <location>
        <begin position="922"/>
        <end position="924"/>
    </location>
</feature>
<feature type="strand" evidence="17">
    <location>
        <begin position="927"/>
        <end position="935"/>
    </location>
</feature>
<feature type="turn" evidence="17">
    <location>
        <begin position="937"/>
        <end position="940"/>
    </location>
</feature>
<feature type="strand" evidence="17">
    <location>
        <begin position="941"/>
        <end position="943"/>
    </location>
</feature>
<feature type="turn" evidence="17">
    <location>
        <begin position="945"/>
        <end position="947"/>
    </location>
</feature>
<feature type="strand" evidence="17">
    <location>
        <begin position="949"/>
        <end position="952"/>
    </location>
</feature>
<feature type="turn" evidence="17">
    <location>
        <begin position="958"/>
        <end position="960"/>
    </location>
</feature>
<feature type="strand" evidence="17">
    <location>
        <begin position="962"/>
        <end position="972"/>
    </location>
</feature>
<feature type="strand" evidence="17">
    <location>
        <begin position="975"/>
        <end position="977"/>
    </location>
</feature>
<feature type="strand" evidence="17">
    <location>
        <begin position="980"/>
        <end position="990"/>
    </location>
</feature>
<dbReference type="EMBL" id="AF231024">
    <property type="protein sequence ID" value="AAF61930.1"/>
    <property type="molecule type" value="mRNA"/>
</dbReference>
<dbReference type="EMBL" id="AL021392">
    <property type="status" value="NOT_ANNOTATED_CDS"/>
    <property type="molecule type" value="Genomic_DNA"/>
</dbReference>
<dbReference type="EMBL" id="AL031588">
    <property type="status" value="NOT_ANNOTATED_CDS"/>
    <property type="molecule type" value="Genomic_DNA"/>
</dbReference>
<dbReference type="EMBL" id="AL031597">
    <property type="status" value="NOT_ANNOTATED_CDS"/>
    <property type="molecule type" value="Genomic_DNA"/>
</dbReference>
<dbReference type="EMBL" id="BC000059">
    <property type="protein sequence ID" value="AAH00059.2"/>
    <property type="molecule type" value="mRNA"/>
</dbReference>
<dbReference type="CCDS" id="CCDS14076.1">
    <molecule id="Q9NYQ6-1"/>
</dbReference>
<dbReference type="RefSeq" id="NP_055061.1">
    <molecule id="Q9NYQ6-1"/>
    <property type="nucleotide sequence ID" value="NM_014246.4"/>
</dbReference>
<dbReference type="PDB" id="7SZ8">
    <property type="method" value="X-ray"/>
    <property type="resolution" value="2.34 A"/>
    <property type="chains" value="A/B=556-996"/>
</dbReference>
<dbReference type="PDB" id="8D40">
    <property type="method" value="X-ray"/>
    <property type="resolution" value="3.55 A"/>
    <property type="chains" value="A/B=236-683"/>
</dbReference>
<dbReference type="PDBsum" id="7SZ8"/>
<dbReference type="PDBsum" id="8D40"/>
<dbReference type="SASBDB" id="Q9NYQ6"/>
<dbReference type="SMR" id="Q9NYQ6"/>
<dbReference type="BioGRID" id="114981">
    <property type="interactions" value="121"/>
</dbReference>
<dbReference type="FunCoup" id="Q9NYQ6">
    <property type="interactions" value="790"/>
</dbReference>
<dbReference type="IntAct" id="Q9NYQ6">
    <property type="interactions" value="57"/>
</dbReference>
<dbReference type="MINT" id="Q9NYQ6"/>
<dbReference type="STRING" id="9606.ENSP00000262738"/>
<dbReference type="TCDB" id="9.A.14.6.4">
    <property type="family name" value="the g-protein-coupled receptor (gpcr) family"/>
</dbReference>
<dbReference type="GlyConnect" id="1054">
    <property type="glycosylation" value="7 N-Linked glycans (7 sites)"/>
</dbReference>
<dbReference type="GlyCosmos" id="Q9NYQ6">
    <property type="glycosylation" value="22 sites, 9 glycans"/>
</dbReference>
<dbReference type="GlyGen" id="Q9NYQ6">
    <property type="glycosylation" value="34 sites, 41 N-linked glycans (9 sites), 5 O-linked glycans (9 sites)"/>
</dbReference>
<dbReference type="iPTMnet" id="Q9NYQ6"/>
<dbReference type="PhosphoSitePlus" id="Q9NYQ6"/>
<dbReference type="SwissPalm" id="Q9NYQ6"/>
<dbReference type="BioMuta" id="CELSR1"/>
<dbReference type="DMDM" id="22095551"/>
<dbReference type="CPTAC" id="CPTAC-1482"/>
<dbReference type="jPOST" id="Q9NYQ6"/>
<dbReference type="MassIVE" id="Q9NYQ6"/>
<dbReference type="PaxDb" id="9606-ENSP00000262738"/>
<dbReference type="PeptideAtlas" id="Q9NYQ6"/>
<dbReference type="ProteomicsDB" id="83263">
    <molecule id="Q9NYQ6-1"/>
</dbReference>
<dbReference type="ProteomicsDB" id="83264">
    <molecule id="Q9NYQ6-2"/>
</dbReference>
<dbReference type="Pumba" id="Q9NYQ6"/>
<dbReference type="Antibodypedia" id="13897">
    <property type="antibodies" value="183 antibodies from 30 providers"/>
</dbReference>
<dbReference type="DNASU" id="9620"/>
<dbReference type="Ensembl" id="ENST00000262738.9">
    <molecule id="Q9NYQ6-1"/>
    <property type="protein sequence ID" value="ENSP00000262738.3"/>
    <property type="gene ID" value="ENSG00000075275.18"/>
</dbReference>
<dbReference type="Ensembl" id="ENST00000454637.2">
    <molecule id="Q9NYQ6-2"/>
    <property type="protein sequence ID" value="ENSP00000414689.2"/>
    <property type="gene ID" value="ENSG00000075275.18"/>
</dbReference>
<dbReference type="GeneID" id="9620"/>
<dbReference type="KEGG" id="hsa:9620"/>
<dbReference type="UCSC" id="uc003bhw.1">
    <molecule id="Q9NYQ6-1"/>
    <property type="organism name" value="human"/>
</dbReference>
<dbReference type="AGR" id="HGNC:1850"/>
<dbReference type="CTD" id="9620"/>
<dbReference type="DisGeNET" id="9620"/>
<dbReference type="GeneCards" id="CELSR1"/>
<dbReference type="HGNC" id="HGNC:1850">
    <property type="gene designation" value="CELSR1"/>
</dbReference>
<dbReference type="HPA" id="ENSG00000075275">
    <property type="expression patterns" value="Tissue enhanced (skin)"/>
</dbReference>
<dbReference type="MalaCards" id="CELSR1"/>
<dbReference type="MIM" id="182940">
    <property type="type" value="phenotype"/>
</dbReference>
<dbReference type="MIM" id="604523">
    <property type="type" value="gene"/>
</dbReference>
<dbReference type="MIM" id="619319">
    <property type="type" value="phenotype"/>
</dbReference>
<dbReference type="neXtProt" id="NX_Q9NYQ6"/>
<dbReference type="OpenTargets" id="ENSG00000075275"/>
<dbReference type="Orphanet" id="569816">
    <property type="disease" value="CELSR1-related late-onset primary lymphedema"/>
</dbReference>
<dbReference type="PharmGKB" id="PA26393"/>
<dbReference type="VEuPathDB" id="HostDB:ENSG00000075275"/>
<dbReference type="eggNOG" id="KOG4289">
    <property type="taxonomic scope" value="Eukaryota"/>
</dbReference>
<dbReference type="GeneTree" id="ENSGT00940000159839"/>
<dbReference type="HOGENOM" id="CLU_000158_1_0_1"/>
<dbReference type="InParanoid" id="Q9NYQ6"/>
<dbReference type="OrthoDB" id="26203at2759"/>
<dbReference type="PAN-GO" id="Q9NYQ6">
    <property type="GO annotations" value="1 GO annotation based on evolutionary models"/>
</dbReference>
<dbReference type="PhylomeDB" id="Q9NYQ6"/>
<dbReference type="TreeFam" id="TF323983"/>
<dbReference type="PathwayCommons" id="Q9NYQ6"/>
<dbReference type="SignaLink" id="Q9NYQ6"/>
<dbReference type="BioGRID-ORCS" id="9620">
    <property type="hits" value="16 hits in 1155 CRISPR screens"/>
</dbReference>
<dbReference type="ChiTaRS" id="CELSR1">
    <property type="organism name" value="human"/>
</dbReference>
<dbReference type="GeneWiki" id="CELSR1"/>
<dbReference type="GenomeRNAi" id="9620"/>
<dbReference type="Pharos" id="Q9NYQ6">
    <property type="development level" value="Tbio"/>
</dbReference>
<dbReference type="PRO" id="PR:Q9NYQ6"/>
<dbReference type="Proteomes" id="UP000005640">
    <property type="component" value="Chromosome 22"/>
</dbReference>
<dbReference type="RNAct" id="Q9NYQ6">
    <property type="molecule type" value="protein"/>
</dbReference>
<dbReference type="Bgee" id="ENSG00000075275">
    <property type="expression patterns" value="Expressed in ventricular zone and 147 other cell types or tissues"/>
</dbReference>
<dbReference type="ExpressionAtlas" id="Q9NYQ6">
    <property type="expression patterns" value="baseline and differential"/>
</dbReference>
<dbReference type="GO" id="GO:0016020">
    <property type="term" value="C:membrane"/>
    <property type="evidence" value="ECO:0000304"/>
    <property type="project" value="UniProtKB"/>
</dbReference>
<dbReference type="GO" id="GO:0005654">
    <property type="term" value="C:nucleoplasm"/>
    <property type="evidence" value="ECO:0000314"/>
    <property type="project" value="HPA"/>
</dbReference>
<dbReference type="GO" id="GO:0005886">
    <property type="term" value="C:plasma membrane"/>
    <property type="evidence" value="ECO:0000314"/>
    <property type="project" value="HPA"/>
</dbReference>
<dbReference type="GO" id="GO:0005509">
    <property type="term" value="F:calcium ion binding"/>
    <property type="evidence" value="ECO:0007669"/>
    <property type="project" value="InterPro"/>
</dbReference>
<dbReference type="GO" id="GO:0004930">
    <property type="term" value="F:G protein-coupled receptor activity"/>
    <property type="evidence" value="ECO:0007669"/>
    <property type="project" value="UniProtKB-KW"/>
</dbReference>
<dbReference type="GO" id="GO:0045176">
    <property type="term" value="P:apical protein localization"/>
    <property type="evidence" value="ECO:0000250"/>
    <property type="project" value="UniProtKB"/>
</dbReference>
<dbReference type="GO" id="GO:0098609">
    <property type="term" value="P:cell-cell adhesion"/>
    <property type="evidence" value="ECO:0000318"/>
    <property type="project" value="GO_Central"/>
</dbReference>
<dbReference type="GO" id="GO:0007417">
    <property type="term" value="P:central nervous system development"/>
    <property type="evidence" value="ECO:0000304"/>
    <property type="project" value="UniProtKB"/>
</dbReference>
<dbReference type="GO" id="GO:0048105">
    <property type="term" value="P:establishment of body hair planar orientation"/>
    <property type="evidence" value="ECO:0000250"/>
    <property type="project" value="UniProtKB"/>
</dbReference>
<dbReference type="GO" id="GO:0001736">
    <property type="term" value="P:establishment of planar polarity"/>
    <property type="evidence" value="ECO:0000250"/>
    <property type="project" value="UniProtKB"/>
</dbReference>
<dbReference type="GO" id="GO:0042249">
    <property type="term" value="P:establishment of planar polarity of embryonic epithelium"/>
    <property type="evidence" value="ECO:0000250"/>
    <property type="project" value="UniProtKB"/>
</dbReference>
<dbReference type="GO" id="GO:0007156">
    <property type="term" value="P:homophilic cell adhesion via plasma membrane adhesion molecules"/>
    <property type="evidence" value="ECO:0007669"/>
    <property type="project" value="InterPro"/>
</dbReference>
<dbReference type="GO" id="GO:0060490">
    <property type="term" value="P:lateral sprouting involved in lung morphogenesis"/>
    <property type="evidence" value="ECO:0000250"/>
    <property type="project" value="UniProtKB"/>
</dbReference>
<dbReference type="GO" id="GO:0001843">
    <property type="term" value="P:neural tube closure"/>
    <property type="evidence" value="ECO:0000250"/>
    <property type="project" value="UniProtKB"/>
</dbReference>
<dbReference type="GO" id="GO:0001764">
    <property type="term" value="P:neuron migration"/>
    <property type="evidence" value="ECO:0000250"/>
    <property type="project" value="UniProtKB"/>
</dbReference>
<dbReference type="GO" id="GO:0060488">
    <property type="term" value="P:orthogonal dichotomous subdivision of terminal units involved in lung branching morphogenesis"/>
    <property type="evidence" value="ECO:0000250"/>
    <property type="project" value="UniProtKB"/>
</dbReference>
<dbReference type="GO" id="GO:0060489">
    <property type="term" value="P:planar dichotomous subdivision of terminal units involved in lung branching morphogenesis"/>
    <property type="evidence" value="ECO:0000250"/>
    <property type="project" value="UniProtKB"/>
</dbReference>
<dbReference type="GO" id="GO:0090251">
    <property type="term" value="P:protein localization involved in establishment of planar polarity"/>
    <property type="evidence" value="ECO:0000250"/>
    <property type="project" value="UniProtKB"/>
</dbReference>
<dbReference type="GO" id="GO:0032956">
    <property type="term" value="P:regulation of actin cytoskeleton organization"/>
    <property type="evidence" value="ECO:0000250"/>
    <property type="project" value="UniProtKB"/>
</dbReference>
<dbReference type="GO" id="GO:0007266">
    <property type="term" value="P:Rho protein signal transduction"/>
    <property type="evidence" value="ECO:0000250"/>
    <property type="project" value="UniProtKB"/>
</dbReference>
<dbReference type="GO" id="GO:0060071">
    <property type="term" value="P:Wnt signaling pathway, planar cell polarity pathway"/>
    <property type="evidence" value="ECO:0000303"/>
    <property type="project" value="ParkinsonsUK-UCL"/>
</dbReference>
<dbReference type="CDD" id="cd11304">
    <property type="entry name" value="Cadherin_repeat"/>
    <property type="match status" value="9"/>
</dbReference>
<dbReference type="CDD" id="cd00054">
    <property type="entry name" value="EGF_CA"/>
    <property type="match status" value="4"/>
</dbReference>
<dbReference type="CDD" id="cd00055">
    <property type="entry name" value="EGF_Lam"/>
    <property type="match status" value="1"/>
</dbReference>
<dbReference type="CDD" id="cd00110">
    <property type="entry name" value="LamG"/>
    <property type="match status" value="2"/>
</dbReference>
<dbReference type="FunFam" id="2.10.25.10:FF:000011">
    <property type="entry name" value="Cadherin EGF LAG seven-pass G-type receptor"/>
    <property type="match status" value="1"/>
</dbReference>
<dbReference type="FunFam" id="2.60.40.60:FF:000013">
    <property type="entry name" value="Cadherin EGF LAG seven-pass G-type receptor"/>
    <property type="match status" value="1"/>
</dbReference>
<dbReference type="FunFam" id="1.25.40.610:FF:000007">
    <property type="entry name" value="Cadherin EGF LAG seven-pass G-type receptor 1"/>
    <property type="match status" value="1"/>
</dbReference>
<dbReference type="FunFam" id="2.10.25.10:FF:000503">
    <property type="entry name" value="Cadherin EGF LAG seven-pass G-type receptor 1"/>
    <property type="match status" value="1"/>
</dbReference>
<dbReference type="FunFam" id="2.60.120.200:FF:000059">
    <property type="entry name" value="Cadherin EGF LAG seven-pass G-type receptor 1"/>
    <property type="match status" value="1"/>
</dbReference>
<dbReference type="FunFam" id="2.170.300.10:FF:000011">
    <property type="entry name" value="cadherin EGF LAG seven-pass G-type receptor 1"/>
    <property type="match status" value="1"/>
</dbReference>
<dbReference type="FunFam" id="1.20.1070.10:FF:000123">
    <property type="entry name" value="cadherin EGF LAG seven-pass G-type receptor 1 isoform X2"/>
    <property type="match status" value="1"/>
</dbReference>
<dbReference type="FunFam" id="2.10.25.10:FF:000047">
    <property type="entry name" value="Cadherin EGF LAG seven-pass G-type receptor 2"/>
    <property type="match status" value="1"/>
</dbReference>
<dbReference type="FunFam" id="2.10.25.10:FF:000183">
    <property type="entry name" value="Cadherin EGF LAG seven-pass G-type receptor 2"/>
    <property type="match status" value="1"/>
</dbReference>
<dbReference type="FunFam" id="2.60.120.200:FF:000020">
    <property type="entry name" value="Cadherin EGF LAG seven-pass G-type receptor 2"/>
    <property type="match status" value="1"/>
</dbReference>
<dbReference type="FunFam" id="2.10.25.10:FF:000156">
    <property type="entry name" value="cadherin EGF LAG seven-pass G-type receptor 2"/>
    <property type="match status" value="1"/>
</dbReference>
<dbReference type="FunFam" id="2.10.25.10:FF:000089">
    <property type="entry name" value="Cadherin EGF LAG seven-pass G-type receptor 3"/>
    <property type="match status" value="1"/>
</dbReference>
<dbReference type="FunFam" id="2.60.40.60:FF:000010">
    <property type="entry name" value="Cadherin EGF LAG seven-pass G-type receptor 3"/>
    <property type="match status" value="2"/>
</dbReference>
<dbReference type="FunFam" id="2.60.40.60:FF:000023">
    <property type="entry name" value="Cadherin EGF LAG seven-pass G-type receptor 3"/>
    <property type="match status" value="2"/>
</dbReference>
<dbReference type="FunFam" id="2.60.40.60:FF:000029">
    <property type="entry name" value="Cadherin EGF LAG seven-pass G-type receptor 3"/>
    <property type="match status" value="1"/>
</dbReference>
<dbReference type="FunFam" id="2.60.40.60:FF:000038">
    <property type="entry name" value="Cadherin EGF LAG seven-pass G-type receptor 3"/>
    <property type="match status" value="1"/>
</dbReference>
<dbReference type="FunFam" id="2.60.40.60:FF:000040">
    <property type="entry name" value="cadherin EGF LAG seven-pass G-type receptor 3"/>
    <property type="match status" value="1"/>
</dbReference>
<dbReference type="FunFam" id="2.10.25.10:FF:000113">
    <property type="entry name" value="Cadherin, EGF LAG seven-pass G-type receptor 3"/>
    <property type="match status" value="1"/>
</dbReference>
<dbReference type="FunFam" id="2.60.40.60:FF:000044">
    <property type="entry name" value="Cadherin, EGF LAG seven-pass G-type receptor 3"/>
    <property type="match status" value="1"/>
</dbReference>
<dbReference type="FunFam" id="4.10.1240.10:FF:000003">
    <property type="entry name" value="Putative cadherin EGF LAG seven-pass G-type receptor 2"/>
    <property type="match status" value="1"/>
</dbReference>
<dbReference type="Gene3D" id="1.25.40.610">
    <property type="match status" value="1"/>
</dbReference>
<dbReference type="Gene3D" id="2.60.120.200">
    <property type="match status" value="2"/>
</dbReference>
<dbReference type="Gene3D" id="2.60.220.50">
    <property type="match status" value="1"/>
</dbReference>
<dbReference type="Gene3D" id="2.60.40.60">
    <property type="entry name" value="Cadherins"/>
    <property type="match status" value="9"/>
</dbReference>
<dbReference type="Gene3D" id="4.10.1240.10">
    <property type="entry name" value="GPCR, family 2, extracellular hormone receptor domain"/>
    <property type="match status" value="1"/>
</dbReference>
<dbReference type="Gene3D" id="2.10.25.10">
    <property type="entry name" value="Laminin"/>
    <property type="match status" value="6"/>
</dbReference>
<dbReference type="Gene3D" id="1.20.1070.10">
    <property type="entry name" value="Rhodopsin 7-helix transmembrane proteins"/>
    <property type="match status" value="1"/>
</dbReference>
<dbReference type="Gene3D" id="2.170.300.10">
    <property type="entry name" value="Tie2 ligand-binding domain superfamily"/>
    <property type="match status" value="1"/>
</dbReference>
<dbReference type="InterPro" id="IPR002126">
    <property type="entry name" value="Cadherin-like_dom"/>
</dbReference>
<dbReference type="InterPro" id="IPR015919">
    <property type="entry name" value="Cadherin-like_sf"/>
</dbReference>
<dbReference type="InterPro" id="IPR056286">
    <property type="entry name" value="Cadherin_CELSR1-3_9th"/>
</dbReference>
<dbReference type="InterPro" id="IPR020894">
    <property type="entry name" value="Cadherin_CS"/>
</dbReference>
<dbReference type="InterPro" id="IPR013320">
    <property type="entry name" value="ConA-like_dom_sf"/>
</dbReference>
<dbReference type="InterPro" id="IPR001881">
    <property type="entry name" value="EGF-like_Ca-bd_dom"/>
</dbReference>
<dbReference type="InterPro" id="IPR000742">
    <property type="entry name" value="EGF-like_dom"/>
</dbReference>
<dbReference type="InterPro" id="IPR000152">
    <property type="entry name" value="EGF-type_Asp/Asn_hydroxyl_site"/>
</dbReference>
<dbReference type="InterPro" id="IPR057244">
    <property type="entry name" value="GAIN_B"/>
</dbReference>
<dbReference type="InterPro" id="IPR032471">
    <property type="entry name" value="GAIN_dom_N"/>
</dbReference>
<dbReference type="InterPro" id="IPR046338">
    <property type="entry name" value="GAIN_dom_sf"/>
</dbReference>
<dbReference type="InterPro" id="IPR017981">
    <property type="entry name" value="GPCR_2-like_7TM"/>
</dbReference>
<dbReference type="InterPro" id="IPR036445">
    <property type="entry name" value="GPCR_2_extracell_dom_sf"/>
</dbReference>
<dbReference type="InterPro" id="IPR001879">
    <property type="entry name" value="GPCR_2_extracellular_dom"/>
</dbReference>
<dbReference type="InterPro" id="IPR000832">
    <property type="entry name" value="GPCR_2_secretin-like"/>
</dbReference>
<dbReference type="InterPro" id="IPR000203">
    <property type="entry name" value="GPS"/>
</dbReference>
<dbReference type="InterPro" id="IPR009030">
    <property type="entry name" value="Growth_fac_rcpt_cys_sf"/>
</dbReference>
<dbReference type="InterPro" id="IPR001791">
    <property type="entry name" value="Laminin_G"/>
</dbReference>
<dbReference type="InterPro" id="IPR002049">
    <property type="entry name" value="LE_dom"/>
</dbReference>
<dbReference type="PANTHER" id="PTHR24026:SF36">
    <property type="entry name" value="CADHERIN EGF LAG SEVEN-PASS G-TYPE RECEPTOR 1"/>
    <property type="match status" value="1"/>
</dbReference>
<dbReference type="PANTHER" id="PTHR24026">
    <property type="entry name" value="FAT ATYPICAL CADHERIN-RELATED"/>
    <property type="match status" value="1"/>
</dbReference>
<dbReference type="Pfam" id="PF00002">
    <property type="entry name" value="7tm_2"/>
    <property type="match status" value="1"/>
</dbReference>
<dbReference type="Pfam" id="PF00028">
    <property type="entry name" value="Cadherin"/>
    <property type="match status" value="8"/>
</dbReference>
<dbReference type="Pfam" id="PF23592">
    <property type="entry name" value="Cadherin_CELSR2_9th"/>
    <property type="match status" value="1"/>
</dbReference>
<dbReference type="Pfam" id="PF00008">
    <property type="entry name" value="EGF"/>
    <property type="match status" value="1"/>
</dbReference>
<dbReference type="Pfam" id="PF00053">
    <property type="entry name" value="EGF_laminin"/>
    <property type="match status" value="1"/>
</dbReference>
<dbReference type="Pfam" id="PF16489">
    <property type="entry name" value="GAIN"/>
    <property type="match status" value="1"/>
</dbReference>
<dbReference type="Pfam" id="PF01825">
    <property type="entry name" value="GPS"/>
    <property type="match status" value="1"/>
</dbReference>
<dbReference type="Pfam" id="PF02793">
    <property type="entry name" value="HRM"/>
    <property type="match status" value="1"/>
</dbReference>
<dbReference type="Pfam" id="PF02210">
    <property type="entry name" value="Laminin_G_2"/>
    <property type="match status" value="2"/>
</dbReference>
<dbReference type="PRINTS" id="PR00205">
    <property type="entry name" value="CADHERIN"/>
</dbReference>
<dbReference type="PRINTS" id="PR00249">
    <property type="entry name" value="GPCRSECRETIN"/>
</dbReference>
<dbReference type="SMART" id="SM00112">
    <property type="entry name" value="CA"/>
    <property type="match status" value="9"/>
</dbReference>
<dbReference type="SMART" id="SM00181">
    <property type="entry name" value="EGF"/>
    <property type="match status" value="6"/>
</dbReference>
<dbReference type="SMART" id="SM00179">
    <property type="entry name" value="EGF_CA"/>
    <property type="match status" value="4"/>
</dbReference>
<dbReference type="SMART" id="SM00180">
    <property type="entry name" value="EGF_Lam"/>
    <property type="match status" value="1"/>
</dbReference>
<dbReference type="SMART" id="SM00303">
    <property type="entry name" value="GPS"/>
    <property type="match status" value="1"/>
</dbReference>
<dbReference type="SMART" id="SM00008">
    <property type="entry name" value="HormR"/>
    <property type="match status" value="1"/>
</dbReference>
<dbReference type="SMART" id="SM00282">
    <property type="entry name" value="LamG"/>
    <property type="match status" value="2"/>
</dbReference>
<dbReference type="SUPFAM" id="SSF49313">
    <property type="entry name" value="Cadherin-like"/>
    <property type="match status" value="9"/>
</dbReference>
<dbReference type="SUPFAM" id="SSF49899">
    <property type="entry name" value="Concanavalin A-like lectins/glucanases"/>
    <property type="match status" value="2"/>
</dbReference>
<dbReference type="SUPFAM" id="SSF57196">
    <property type="entry name" value="EGF/Laminin"/>
    <property type="match status" value="3"/>
</dbReference>
<dbReference type="SUPFAM" id="SSF81321">
    <property type="entry name" value="Family A G protein-coupled receptor-like"/>
    <property type="match status" value="1"/>
</dbReference>
<dbReference type="SUPFAM" id="SSF57184">
    <property type="entry name" value="Growth factor receptor domain"/>
    <property type="match status" value="1"/>
</dbReference>
<dbReference type="PROSITE" id="PS00010">
    <property type="entry name" value="ASX_HYDROXYL"/>
    <property type="match status" value="2"/>
</dbReference>
<dbReference type="PROSITE" id="PS00232">
    <property type="entry name" value="CADHERIN_1"/>
    <property type="match status" value="7"/>
</dbReference>
<dbReference type="PROSITE" id="PS50268">
    <property type="entry name" value="CADHERIN_2"/>
    <property type="match status" value="9"/>
</dbReference>
<dbReference type="PROSITE" id="PS00022">
    <property type="entry name" value="EGF_1"/>
    <property type="match status" value="6"/>
</dbReference>
<dbReference type="PROSITE" id="PS01186">
    <property type="entry name" value="EGF_2"/>
    <property type="match status" value="2"/>
</dbReference>
<dbReference type="PROSITE" id="PS50026">
    <property type="entry name" value="EGF_3"/>
    <property type="match status" value="6"/>
</dbReference>
<dbReference type="PROSITE" id="PS01248">
    <property type="entry name" value="EGF_LAM_1"/>
    <property type="match status" value="1"/>
</dbReference>
<dbReference type="PROSITE" id="PS50027">
    <property type="entry name" value="EGF_LAM_2"/>
    <property type="match status" value="1"/>
</dbReference>
<dbReference type="PROSITE" id="PS50227">
    <property type="entry name" value="G_PROTEIN_RECEP_F2_3"/>
    <property type="match status" value="1"/>
</dbReference>
<dbReference type="PROSITE" id="PS50261">
    <property type="entry name" value="G_PROTEIN_RECEP_F2_4"/>
    <property type="match status" value="1"/>
</dbReference>
<dbReference type="PROSITE" id="PS50221">
    <property type="entry name" value="GAIN_B"/>
    <property type="match status" value="1"/>
</dbReference>
<dbReference type="PROSITE" id="PS50025">
    <property type="entry name" value="LAM_G_DOMAIN"/>
    <property type="match status" value="2"/>
</dbReference>
<gene>
    <name type="primary">CELSR1</name>
    <name type="synonym">CDHF9</name>
    <name type="synonym">FMI2</name>
</gene>
<name>CELR1_HUMAN</name>
<reference key="1">
    <citation type="journal article" date="2000" name="Proc. Natl. Acad. Sci. U.S.A.">
        <title>Large exons encoding multiple ectodomains are a characteristic feature of protocadherin genes.</title>
        <authorList>
            <person name="Wu Q."/>
            <person name="Maniatis T."/>
        </authorList>
    </citation>
    <scope>NUCLEOTIDE SEQUENCE [MRNA] (ISOFORM 1)</scope>
</reference>
<reference key="2">
    <citation type="journal article" date="1999" name="Nature">
        <title>The DNA sequence of human chromosome 22.</title>
        <authorList>
            <person name="Dunham I."/>
            <person name="Hunt A.R."/>
            <person name="Collins J.E."/>
            <person name="Bruskiewich R."/>
            <person name="Beare D.M."/>
            <person name="Clamp M."/>
            <person name="Smink L.J."/>
            <person name="Ainscough R."/>
            <person name="Almeida J.P."/>
            <person name="Babbage A.K."/>
            <person name="Bagguley C."/>
            <person name="Bailey J."/>
            <person name="Barlow K.F."/>
            <person name="Bates K.N."/>
            <person name="Beasley O.P."/>
            <person name="Bird C.P."/>
            <person name="Blakey S.E."/>
            <person name="Bridgeman A.M."/>
            <person name="Buck D."/>
            <person name="Burgess J."/>
            <person name="Burrill W.D."/>
            <person name="Burton J."/>
            <person name="Carder C."/>
            <person name="Carter N.P."/>
            <person name="Chen Y."/>
            <person name="Clark G."/>
            <person name="Clegg S.M."/>
            <person name="Cobley V.E."/>
            <person name="Cole C.G."/>
            <person name="Collier R.E."/>
            <person name="Connor R."/>
            <person name="Conroy D."/>
            <person name="Corby N.R."/>
            <person name="Coville G.J."/>
            <person name="Cox A.V."/>
            <person name="Davis J."/>
            <person name="Dawson E."/>
            <person name="Dhami P.D."/>
            <person name="Dockree C."/>
            <person name="Dodsworth S.J."/>
            <person name="Durbin R.M."/>
            <person name="Ellington A.G."/>
            <person name="Evans K.L."/>
            <person name="Fey J.M."/>
            <person name="Fleming K."/>
            <person name="French L."/>
            <person name="Garner A.A."/>
            <person name="Gilbert J.G.R."/>
            <person name="Goward M.E."/>
            <person name="Grafham D.V."/>
            <person name="Griffiths M.N.D."/>
            <person name="Hall C."/>
            <person name="Hall R.E."/>
            <person name="Hall-Tamlyn G."/>
            <person name="Heathcott R.W."/>
            <person name="Ho S."/>
            <person name="Holmes S."/>
            <person name="Hunt S.E."/>
            <person name="Jones M.C."/>
            <person name="Kershaw J."/>
            <person name="Kimberley A.M."/>
            <person name="King A."/>
            <person name="Laird G.K."/>
            <person name="Langford C.F."/>
            <person name="Leversha M.A."/>
            <person name="Lloyd C."/>
            <person name="Lloyd D.M."/>
            <person name="Martyn I.D."/>
            <person name="Mashreghi-Mohammadi M."/>
            <person name="Matthews L.H."/>
            <person name="Mccann O.T."/>
            <person name="Mcclay J."/>
            <person name="Mclaren S."/>
            <person name="McMurray A.A."/>
            <person name="Milne S.A."/>
            <person name="Mortimore B.J."/>
            <person name="Odell C.N."/>
            <person name="Pavitt R."/>
            <person name="Pearce A.V."/>
            <person name="Pearson D."/>
            <person name="Phillimore B.J.C.T."/>
            <person name="Phillips S.H."/>
            <person name="Plumb R.W."/>
            <person name="Ramsay H."/>
            <person name="Ramsey Y."/>
            <person name="Rogers L."/>
            <person name="Ross M.T."/>
            <person name="Scott C.E."/>
            <person name="Sehra H.K."/>
            <person name="Skuce C.D."/>
            <person name="Smalley S."/>
            <person name="Smith M.L."/>
            <person name="Soderlund C."/>
            <person name="Spragon L."/>
            <person name="Steward C.A."/>
            <person name="Sulston J.E."/>
            <person name="Swann R.M."/>
            <person name="Vaudin M."/>
            <person name="Wall M."/>
            <person name="Wallis J.M."/>
            <person name="Whiteley M.N."/>
            <person name="Willey D.L."/>
            <person name="Williams L."/>
            <person name="Williams S.A."/>
            <person name="Williamson H."/>
            <person name="Wilmer T.E."/>
            <person name="Wilming L."/>
            <person name="Wright C.L."/>
            <person name="Hubbard T."/>
            <person name="Bentley D.R."/>
            <person name="Beck S."/>
            <person name="Rogers J."/>
            <person name="Shimizu N."/>
            <person name="Minoshima S."/>
            <person name="Kawasaki K."/>
            <person name="Sasaki T."/>
            <person name="Asakawa S."/>
            <person name="Kudoh J."/>
            <person name="Shintani A."/>
            <person name="Shibuya K."/>
            <person name="Yoshizaki Y."/>
            <person name="Aoki N."/>
            <person name="Mitsuyama S."/>
            <person name="Roe B.A."/>
            <person name="Chen F."/>
            <person name="Chu L."/>
            <person name="Crabtree J."/>
            <person name="Deschamps S."/>
            <person name="Do A."/>
            <person name="Do T."/>
            <person name="Dorman A."/>
            <person name="Fang F."/>
            <person name="Fu Y."/>
            <person name="Hu P."/>
            <person name="Hua A."/>
            <person name="Kenton S."/>
            <person name="Lai H."/>
            <person name="Lao H.I."/>
            <person name="Lewis J."/>
            <person name="Lewis S."/>
            <person name="Lin S.-P."/>
            <person name="Loh P."/>
            <person name="Malaj E."/>
            <person name="Nguyen T."/>
            <person name="Pan H."/>
            <person name="Phan S."/>
            <person name="Qi S."/>
            <person name="Qian Y."/>
            <person name="Ray L."/>
            <person name="Ren Q."/>
            <person name="Shaull S."/>
            <person name="Sloan D."/>
            <person name="Song L."/>
            <person name="Wang Q."/>
            <person name="Wang Y."/>
            <person name="Wang Z."/>
            <person name="White J."/>
            <person name="Willingham D."/>
            <person name="Wu H."/>
            <person name="Yao Z."/>
            <person name="Zhan M."/>
            <person name="Zhang G."/>
            <person name="Chissoe S."/>
            <person name="Murray J."/>
            <person name="Miller N."/>
            <person name="Minx P."/>
            <person name="Fulton R."/>
            <person name="Johnson D."/>
            <person name="Bemis G."/>
            <person name="Bentley D."/>
            <person name="Bradshaw H."/>
            <person name="Bourne S."/>
            <person name="Cordes M."/>
            <person name="Du Z."/>
            <person name="Fulton L."/>
            <person name="Goela D."/>
            <person name="Graves T."/>
            <person name="Hawkins J."/>
            <person name="Hinds K."/>
            <person name="Kemp K."/>
            <person name="Latreille P."/>
            <person name="Layman D."/>
            <person name="Ozersky P."/>
            <person name="Rohlfing T."/>
            <person name="Scheet P."/>
            <person name="Walker C."/>
            <person name="Wamsley A."/>
            <person name="Wohldmann P."/>
            <person name="Pepin K."/>
            <person name="Nelson J."/>
            <person name="Korf I."/>
            <person name="Bedell J.A."/>
            <person name="Hillier L.W."/>
            <person name="Mardis E."/>
            <person name="Waterston R."/>
            <person name="Wilson R."/>
            <person name="Emanuel B.S."/>
            <person name="Shaikh T."/>
            <person name="Kurahashi H."/>
            <person name="Saitta S."/>
            <person name="Budarf M.L."/>
            <person name="McDermid H.E."/>
            <person name="Johnson A."/>
            <person name="Wong A.C.C."/>
            <person name="Morrow B.E."/>
            <person name="Edelmann L."/>
            <person name="Kim U.J."/>
            <person name="Shizuya H."/>
            <person name="Simon M.I."/>
            <person name="Dumanski J.P."/>
            <person name="Peyrard M."/>
            <person name="Kedra D."/>
            <person name="Seroussi E."/>
            <person name="Fransson I."/>
            <person name="Tapia I."/>
            <person name="Bruder C.E."/>
            <person name="O'Brien K.P."/>
            <person name="Wilkinson P."/>
            <person name="Bodenteich A."/>
            <person name="Hartman K."/>
            <person name="Hu X."/>
            <person name="Khan A.S."/>
            <person name="Lane L."/>
            <person name="Tilahun Y."/>
            <person name="Wright H."/>
        </authorList>
    </citation>
    <scope>NUCLEOTIDE SEQUENCE [LARGE SCALE GENOMIC DNA]</scope>
</reference>
<reference key="3">
    <citation type="journal article" date="2004" name="Genome Res.">
        <title>The status, quality, and expansion of the NIH full-length cDNA project: the Mammalian Gene Collection (MGC).</title>
        <authorList>
            <consortium name="The MGC Project Team"/>
        </authorList>
    </citation>
    <scope>NUCLEOTIDE SEQUENCE [LARGE SCALE MRNA] OF 627-3014 (ISOFORM 2)</scope>
    <scope>VARIANTS TRP-664 AND ARG-1126</scope>
    <source>
        <tissue>Kidney</tissue>
    </source>
</reference>
<reference key="4">
    <citation type="journal article" date="2008" name="Proc. Natl. Acad. Sci. U.S.A.">
        <title>A quantitative atlas of mitotic phosphorylation.</title>
        <authorList>
            <person name="Dephoure N."/>
            <person name="Zhou C."/>
            <person name="Villen J."/>
            <person name="Beausoleil S.A."/>
            <person name="Bakalarski C.E."/>
            <person name="Elledge S.J."/>
            <person name="Gygi S.P."/>
        </authorList>
    </citation>
    <scope>PHOSPHORYLATION [LARGE SCALE ANALYSIS] AT SER-2764</scope>
    <scope>IDENTIFICATION BY MASS SPECTROMETRY [LARGE SCALE ANALYSIS]</scope>
    <source>
        <tissue>Cervix carcinoma</tissue>
    </source>
</reference>
<reference key="5">
    <citation type="journal article" date="2016" name="Vasc. Cell">
        <title>A novel mutation in CELSR1 is associated with hereditary lymphedema.</title>
        <authorList>
            <person name="Gonzalez-Garay M.L."/>
            <person name="Aldrich M.B."/>
            <person name="Rasmussen J.C."/>
            <person name="Guilliod R."/>
            <person name="Lapinski P.E."/>
            <person name="King P.D."/>
            <person name="Sevick-Muraca E.M."/>
        </authorList>
    </citation>
    <scope>INVOLVEMENT IN LMPHM9</scope>
    <scope>VARIANT LMPHM9 1957-TRP--PRO-3014 DEL</scope>
</reference>
<reference key="6">
    <citation type="journal article" date="2012" name="Hum. Mutat.">
        <title>Mutations in the planar cell polarity genes CELSR1 and SCRIB are associated with the severe neural tube defect craniorachischisis.</title>
        <authorList>
            <person name="Robinson A."/>
            <person name="Escuin S."/>
            <person name="Doudney K."/>
            <person name="Vekemans M."/>
            <person name="Stevenson R.E."/>
            <person name="Greene N.D."/>
            <person name="Copp A.J."/>
            <person name="Stanier P."/>
        </authorList>
    </citation>
    <scope>VARIANTS NTD VAL-773; GLN-2438; LEU-2964 AND ALA-2983</scope>
    <scope>VARIANTS PRO-2312 AND THR-2739</scope>
    <scope>CHARACTERIZATION OF VARIANTS NTD VAL-773; GLN-2438; LEU-2964 AND ALA-2983</scope>
    <scope>CHARACTERIZATION OF VARIANTS PRO-2312 AND THR-2739</scope>
</reference>
<reference key="7">
    <citation type="journal article" date="2019" name="Am. J. Med. Genet. A">
        <title>Increasing evidence of hereditary lymphedema caused by CELSR1 loss-of-function variants.</title>
        <authorList>
            <person name="Maltese P.E."/>
            <person name="Michelini S."/>
            <person name="Ricci M."/>
            <person name="Maitz S."/>
            <person name="Fiorentino A."/>
            <person name="Serrani R."/>
            <person name="Lazzerotti A."/>
            <person name="Bruson A."/>
            <person name="Paolacci S."/>
            <person name="Benedetti S."/>
            <person name="Bertelli M."/>
        </authorList>
    </citation>
    <scope>VARIANTS LMPHM9 290-GLU--PRO-3014 DEL; THR-1058; SER-1539; HIS-1883; VAL-2150; TRP-2425; GLY-2709 AND ARG-3001</scope>
</reference>
<protein>
    <recommendedName>
        <fullName>Cadherin EGF LAG seven-pass G-type receptor 1</fullName>
    </recommendedName>
    <alternativeName>
        <fullName>Cadherin family member 9</fullName>
    </alternativeName>
    <alternativeName>
        <fullName>Flamingo homolog 2</fullName>
        <shortName>hFmi2</shortName>
    </alternativeName>
</protein>